<reference key="1">
    <citation type="journal article" date="1985" name="Cell">
        <title>Conserved sequences flank variable tandem repeats in two S-antigen genes of Plasmodium falciparum.</title>
        <authorList>
            <person name="Cowman A.F."/>
            <person name="Saint R.B."/>
            <person name="Coppel R.L."/>
            <person name="Brown G.V."/>
            <person name="Anders R.F."/>
            <person name="Kemp D.J."/>
        </authorList>
    </citation>
    <scope>NUCLEOTIDE SEQUENCE [GENOMIC DNA]</scope>
</reference>
<reference key="2">
    <citation type="journal article" date="1990" name="J. Protozool.">
        <title>S-antigen localization in the erythrocytic stages of Plasmodium falciparum.</title>
        <authorList>
            <person name="Culvenor J.G."/>
            <person name="Crewther P.E."/>
        </authorList>
    </citation>
    <scope>SUBCELLULAR LOCATION</scope>
    <scope>DEVELOPMENTAL STAGE</scope>
</reference>
<organism>
    <name type="scientific">Plasmodium falciparum (isolate FC27 / Papua New Guinea)</name>
    <dbReference type="NCBI Taxonomy" id="5837"/>
    <lineage>
        <taxon>Eukaryota</taxon>
        <taxon>Sar</taxon>
        <taxon>Alveolata</taxon>
        <taxon>Apicomplexa</taxon>
        <taxon>Aconoidasida</taxon>
        <taxon>Haemosporida</taxon>
        <taxon>Plasmodiidae</taxon>
        <taxon>Plasmodium</taxon>
        <taxon>Plasmodium (Laverania)</taxon>
    </lineage>
</organism>
<comment type="function">
    <text evidence="3">S antigens are soluble heat-stable proteins present in the sera of some infected individuals.</text>
</comment>
<comment type="subcellular location">
    <subcellularLocation>
        <location evidence="2">Parasitophorous vacuole</location>
    </subcellularLocation>
    <text evidence="2">Localizes to the cell periphery in early schizonts and then to the parasitophorous vacuole in late schizonts (PubMed:2406433). Following schizont rupture, the S-antigen is released in host sera (PubMed:2406433).</text>
</comment>
<comment type="developmental stage">
    <text evidence="2">Expressed during the parasite blood stage, specifically in schizonts (at protein level) (PubMed:2406433). Not expressed in free merozoites (at protein level) (PubMed:2406433).</text>
</comment>
<comment type="polymorphism">
    <text evidence="4">Diversity in S-antigen is mainly due to polymorphism in the repetitive regions.</text>
</comment>
<dbReference type="EMBL" id="M10129">
    <property type="protein sequence ID" value="AAA29757.1"/>
    <property type="molecule type" value="Genomic_DNA"/>
</dbReference>
<dbReference type="PIR" id="A22011">
    <property type="entry name" value="YAZQF7"/>
</dbReference>
<dbReference type="GO" id="GO:0020003">
    <property type="term" value="C:symbiont-containing vacuole"/>
    <property type="evidence" value="ECO:0000314"/>
    <property type="project" value="UniProtKB"/>
</dbReference>
<dbReference type="InterPro" id="IPR008825">
    <property type="entry name" value="S-antigen"/>
</dbReference>
<dbReference type="Pfam" id="PF05756">
    <property type="entry name" value="S-antigen"/>
    <property type="match status" value="1"/>
</dbReference>
<sequence length="265" mass="27934">MNRILSVTFYLFFIYLYIYETYGKVKNTDKELSDIYGTKYYLRSGFFNSKKCKGHKYEDLQAEGEGENDKEEDSNNEEMNIDEENGLIEGQGESEDPAKASQGGLEDPAKASQGGLEDPAKASQGGLEDPAKASQGGLEDPAKASQGGLEDPAKASQGGLEDPAKASQGGLEDPAKASQGGLEDPAKASQGGLEDPAKASQGGLEDPAKASQGGLEDPAKASQGGLEDPAKASQGGAEGHGKHAPNKENKNKNKESIKNIMNMFI</sequence>
<name>SANT_PLAFF</name>
<evidence type="ECO:0000256" key="1">
    <source>
        <dbReference type="SAM" id="MobiDB-lite"/>
    </source>
</evidence>
<evidence type="ECO:0000269" key="2">
    <source>
    </source>
</evidence>
<evidence type="ECO:0000305" key="3"/>
<evidence type="ECO:0000305" key="4">
    <source>
    </source>
</evidence>
<feature type="signal peptide">
    <location>
        <begin position="1"/>
        <end position="23"/>
    </location>
</feature>
<feature type="chain" id="PRO_0000024622" description="S-antigen protein">
    <location>
        <begin position="24"/>
        <end position="265"/>
    </location>
</feature>
<feature type="repeat" description="1">
    <location>
        <begin position="97"/>
        <end position="107"/>
    </location>
</feature>
<feature type="repeat" description="2">
    <location>
        <begin position="108"/>
        <end position="118"/>
    </location>
</feature>
<feature type="repeat" description="3">
    <location>
        <begin position="119"/>
        <end position="129"/>
    </location>
</feature>
<feature type="repeat" description="4">
    <location>
        <begin position="130"/>
        <end position="140"/>
    </location>
</feature>
<feature type="repeat" description="5">
    <location>
        <begin position="141"/>
        <end position="151"/>
    </location>
</feature>
<feature type="repeat" description="6">
    <location>
        <begin position="152"/>
        <end position="162"/>
    </location>
</feature>
<feature type="repeat" description="7">
    <location>
        <begin position="163"/>
        <end position="173"/>
    </location>
</feature>
<feature type="repeat" description="8">
    <location>
        <begin position="174"/>
        <end position="184"/>
    </location>
</feature>
<feature type="repeat" description="9">
    <location>
        <begin position="185"/>
        <end position="195"/>
    </location>
</feature>
<feature type="repeat" description="10">
    <location>
        <begin position="196"/>
        <end position="206"/>
    </location>
</feature>
<feature type="repeat" description="11">
    <location>
        <begin position="207"/>
        <end position="217"/>
    </location>
</feature>
<feature type="repeat" description="12">
    <location>
        <begin position="218"/>
        <end position="228"/>
    </location>
</feature>
<feature type="repeat" description="13; approximate">
    <location>
        <begin position="229"/>
        <end position="239"/>
    </location>
</feature>
<feature type="region of interest" description="Disordered" evidence="1">
    <location>
        <begin position="59"/>
        <end position="265"/>
    </location>
</feature>
<feature type="region of interest" description="13 X 11 AA approximate tandem repeats of P-A-K-A-S-Q-G-G-L-E-D">
    <location>
        <begin position="97"/>
        <end position="239"/>
    </location>
</feature>
<feature type="compositionally biased region" description="Acidic residues" evidence="1">
    <location>
        <begin position="60"/>
        <end position="86"/>
    </location>
</feature>
<feature type="compositionally biased region" description="Basic and acidic residues" evidence="1">
    <location>
        <begin position="239"/>
        <end position="257"/>
    </location>
</feature>
<keyword id="KW-0461">Malaria</keyword>
<keyword id="KW-0677">Repeat</keyword>
<keyword id="KW-0732">Signal</keyword>
<proteinExistence type="evidence at protein level"/>
<protein>
    <recommendedName>
        <fullName>S-antigen protein</fullName>
    </recommendedName>
</protein>
<accession>P04927</accession>